<proteinExistence type="inferred from homology"/>
<dbReference type="EMBL" id="CP000936">
    <property type="protein sequence ID" value="ACA36222.1"/>
    <property type="molecule type" value="Genomic_DNA"/>
</dbReference>
<dbReference type="RefSeq" id="WP_001151785.1">
    <property type="nucleotide sequence ID" value="NC_010380.1"/>
</dbReference>
<dbReference type="SMR" id="B1ICW1"/>
<dbReference type="GeneID" id="45653220"/>
<dbReference type="KEGG" id="spv:SPH_1655"/>
<dbReference type="HOGENOM" id="CLU_113441_5_3_9"/>
<dbReference type="Proteomes" id="UP000002163">
    <property type="component" value="Chromosome"/>
</dbReference>
<dbReference type="GO" id="GO:0005737">
    <property type="term" value="C:cytoplasm"/>
    <property type="evidence" value="ECO:0007669"/>
    <property type="project" value="UniProtKB-ARBA"/>
</dbReference>
<dbReference type="GO" id="GO:1990904">
    <property type="term" value="C:ribonucleoprotein complex"/>
    <property type="evidence" value="ECO:0007669"/>
    <property type="project" value="UniProtKB-KW"/>
</dbReference>
<dbReference type="GO" id="GO:0005840">
    <property type="term" value="C:ribosome"/>
    <property type="evidence" value="ECO:0007669"/>
    <property type="project" value="UniProtKB-KW"/>
</dbReference>
<dbReference type="GO" id="GO:0070181">
    <property type="term" value="F:small ribosomal subunit rRNA binding"/>
    <property type="evidence" value="ECO:0007669"/>
    <property type="project" value="TreeGrafter"/>
</dbReference>
<dbReference type="GO" id="GO:0003735">
    <property type="term" value="F:structural constituent of ribosome"/>
    <property type="evidence" value="ECO:0007669"/>
    <property type="project" value="InterPro"/>
</dbReference>
<dbReference type="GO" id="GO:0006412">
    <property type="term" value="P:translation"/>
    <property type="evidence" value="ECO:0007669"/>
    <property type="project" value="UniProtKB-UniRule"/>
</dbReference>
<dbReference type="CDD" id="cd00473">
    <property type="entry name" value="bS6"/>
    <property type="match status" value="1"/>
</dbReference>
<dbReference type="FunFam" id="3.30.70.60:FF:000002">
    <property type="entry name" value="30S ribosomal protein S6"/>
    <property type="match status" value="1"/>
</dbReference>
<dbReference type="Gene3D" id="3.30.70.60">
    <property type="match status" value="1"/>
</dbReference>
<dbReference type="HAMAP" id="MF_00360">
    <property type="entry name" value="Ribosomal_bS6"/>
    <property type="match status" value="1"/>
</dbReference>
<dbReference type="InterPro" id="IPR000529">
    <property type="entry name" value="Ribosomal_bS6"/>
</dbReference>
<dbReference type="InterPro" id="IPR035980">
    <property type="entry name" value="Ribosomal_bS6_sf"/>
</dbReference>
<dbReference type="InterPro" id="IPR020814">
    <property type="entry name" value="Ribosomal_S6_plastid/chlpt"/>
</dbReference>
<dbReference type="InterPro" id="IPR014717">
    <property type="entry name" value="Transl_elong_EF1B/ribsomal_bS6"/>
</dbReference>
<dbReference type="NCBIfam" id="TIGR00166">
    <property type="entry name" value="S6"/>
    <property type="match status" value="1"/>
</dbReference>
<dbReference type="PANTHER" id="PTHR21011">
    <property type="entry name" value="MITOCHONDRIAL 28S RIBOSOMAL PROTEIN S6"/>
    <property type="match status" value="1"/>
</dbReference>
<dbReference type="PANTHER" id="PTHR21011:SF1">
    <property type="entry name" value="SMALL RIBOSOMAL SUBUNIT PROTEIN BS6M"/>
    <property type="match status" value="1"/>
</dbReference>
<dbReference type="Pfam" id="PF01250">
    <property type="entry name" value="Ribosomal_S6"/>
    <property type="match status" value="1"/>
</dbReference>
<dbReference type="SUPFAM" id="SSF54995">
    <property type="entry name" value="Ribosomal protein S6"/>
    <property type="match status" value="1"/>
</dbReference>
<comment type="function">
    <text evidence="1">Binds together with bS18 to 16S ribosomal RNA.</text>
</comment>
<comment type="similarity">
    <text evidence="1">Belongs to the bacterial ribosomal protein bS6 family.</text>
</comment>
<sequence>MAKYEILYIIRPNIEEEAKNALVARFDSILTDNGATVVESKTWEKRRLAYEIQDFREGLYHIVNVEANDDAALKEFDRLSKINADILRHMIVKIDA</sequence>
<keyword id="KW-0687">Ribonucleoprotein</keyword>
<keyword id="KW-0689">Ribosomal protein</keyword>
<keyword id="KW-0694">RNA-binding</keyword>
<keyword id="KW-0699">rRNA-binding</keyword>
<organism>
    <name type="scientific">Streptococcus pneumoniae (strain Hungary19A-6)</name>
    <dbReference type="NCBI Taxonomy" id="487214"/>
    <lineage>
        <taxon>Bacteria</taxon>
        <taxon>Bacillati</taxon>
        <taxon>Bacillota</taxon>
        <taxon>Bacilli</taxon>
        <taxon>Lactobacillales</taxon>
        <taxon>Streptococcaceae</taxon>
        <taxon>Streptococcus</taxon>
    </lineage>
</organism>
<gene>
    <name evidence="1" type="primary">rpsF</name>
    <name type="ordered locus">SPH_1655</name>
</gene>
<accession>B1ICW1</accession>
<evidence type="ECO:0000255" key="1">
    <source>
        <dbReference type="HAMAP-Rule" id="MF_00360"/>
    </source>
</evidence>
<evidence type="ECO:0000305" key="2"/>
<name>RS6_STRPI</name>
<feature type="chain" id="PRO_1000120811" description="Small ribosomal subunit protein bS6">
    <location>
        <begin position="1"/>
        <end position="96"/>
    </location>
</feature>
<protein>
    <recommendedName>
        <fullName evidence="1">Small ribosomal subunit protein bS6</fullName>
    </recommendedName>
    <alternativeName>
        <fullName evidence="2">30S ribosomal protein S6</fullName>
    </alternativeName>
</protein>
<reference key="1">
    <citation type="journal article" date="2010" name="Genome Biol.">
        <title>Structure and dynamics of the pan-genome of Streptococcus pneumoniae and closely related species.</title>
        <authorList>
            <person name="Donati C."/>
            <person name="Hiller N.L."/>
            <person name="Tettelin H."/>
            <person name="Muzzi A."/>
            <person name="Croucher N.J."/>
            <person name="Angiuoli S.V."/>
            <person name="Oggioni M."/>
            <person name="Dunning Hotopp J.C."/>
            <person name="Hu F.Z."/>
            <person name="Riley D.R."/>
            <person name="Covacci A."/>
            <person name="Mitchell T.J."/>
            <person name="Bentley S.D."/>
            <person name="Kilian M."/>
            <person name="Ehrlich G.D."/>
            <person name="Rappuoli R."/>
            <person name="Moxon E.R."/>
            <person name="Masignani V."/>
        </authorList>
    </citation>
    <scope>NUCLEOTIDE SEQUENCE [LARGE SCALE GENOMIC DNA]</scope>
    <source>
        <strain>Hungary19A-6</strain>
    </source>
</reference>